<evidence type="ECO:0000250" key="1">
    <source>
        <dbReference type="UniProtKB" id="O75840"/>
    </source>
</evidence>
<evidence type="ECO:0000255" key="2"/>
<evidence type="ECO:0000255" key="3">
    <source>
        <dbReference type="PROSITE-ProRule" id="PRU00042"/>
    </source>
</evidence>
<evidence type="ECO:0000269" key="4">
    <source>
    </source>
</evidence>
<evidence type="ECO:0000269" key="5">
    <source>
    </source>
</evidence>
<evidence type="ECO:0000269" key="6">
    <source>
    </source>
</evidence>
<evidence type="ECO:0000269" key="7">
    <source>
    </source>
</evidence>
<evidence type="ECO:0000269" key="8">
    <source>
    </source>
</evidence>
<evidence type="ECO:0000305" key="9"/>
<accession>Q99JB0</accession>
<accession>Q99P62</accession>
<keyword id="KW-0010">Activator</keyword>
<keyword id="KW-0238">DNA-binding</keyword>
<keyword id="KW-0479">Metal-binding</keyword>
<keyword id="KW-0539">Nucleus</keyword>
<keyword id="KW-1185">Reference proteome</keyword>
<keyword id="KW-0677">Repeat</keyword>
<keyword id="KW-0804">Transcription</keyword>
<keyword id="KW-0805">Transcription regulation</keyword>
<keyword id="KW-0862">Zinc</keyword>
<keyword id="KW-0863">Zinc-finger</keyword>
<gene>
    <name type="primary">Klf7</name>
</gene>
<dbReference type="EMBL" id="AF338369">
    <property type="protein sequence ID" value="AAK31139.1"/>
    <property type="molecule type" value="mRNA"/>
</dbReference>
<dbReference type="EMBL" id="AF327568">
    <property type="protein sequence ID" value="AAK08964.1"/>
    <property type="molecule type" value="mRNA"/>
</dbReference>
<dbReference type="EMBL" id="BC004700">
    <property type="protein sequence ID" value="AAH04700.1"/>
    <property type="molecule type" value="mRNA"/>
</dbReference>
<dbReference type="EMBL" id="BC019604">
    <property type="protein sequence ID" value="AAH19604.1"/>
    <property type="molecule type" value="mRNA"/>
</dbReference>
<dbReference type="EMBL" id="BC040794">
    <property type="protein sequence ID" value="AAH40794.1"/>
    <property type="molecule type" value="mRNA"/>
</dbReference>
<dbReference type="CCDS" id="CCDS15003.1"/>
<dbReference type="RefSeq" id="NP_291041.2">
    <property type="nucleotide sequence ID" value="NM_033563.2"/>
</dbReference>
<dbReference type="RefSeq" id="XP_006496417.1">
    <property type="nucleotide sequence ID" value="XM_006496354.4"/>
</dbReference>
<dbReference type="RefSeq" id="XP_030099629.1">
    <property type="nucleotide sequence ID" value="XM_030243769.1"/>
</dbReference>
<dbReference type="RefSeq" id="XP_030099630.1">
    <property type="nucleotide sequence ID" value="XM_030243770.1"/>
</dbReference>
<dbReference type="SMR" id="Q99JB0"/>
<dbReference type="FunCoup" id="Q99JB0">
    <property type="interactions" value="2085"/>
</dbReference>
<dbReference type="STRING" id="10090.ENSMUSP00000109720"/>
<dbReference type="GlyGen" id="Q99JB0">
    <property type="glycosylation" value="1 site"/>
</dbReference>
<dbReference type="iPTMnet" id="Q99JB0"/>
<dbReference type="PhosphoSitePlus" id="Q99JB0"/>
<dbReference type="PaxDb" id="10090-ENSMUSP00000109720"/>
<dbReference type="ProteomicsDB" id="263621"/>
<dbReference type="Antibodypedia" id="34186">
    <property type="antibodies" value="258 antibodies from 28 providers"/>
</dbReference>
<dbReference type="DNASU" id="93691"/>
<dbReference type="Ensembl" id="ENSMUST00000114086.8">
    <property type="protein sequence ID" value="ENSMUSP00000109720.3"/>
    <property type="gene ID" value="ENSMUSG00000025959.14"/>
</dbReference>
<dbReference type="GeneID" id="93691"/>
<dbReference type="KEGG" id="mmu:93691"/>
<dbReference type="UCSC" id="uc007bgo.2">
    <property type="organism name" value="mouse"/>
</dbReference>
<dbReference type="AGR" id="MGI:1935151"/>
<dbReference type="CTD" id="8609"/>
<dbReference type="MGI" id="MGI:1935151">
    <property type="gene designation" value="Klf7"/>
</dbReference>
<dbReference type="VEuPathDB" id="HostDB:ENSMUSG00000025959"/>
<dbReference type="eggNOG" id="KOG1721">
    <property type="taxonomic scope" value="Eukaryota"/>
</dbReference>
<dbReference type="GeneTree" id="ENSGT00940000155235"/>
<dbReference type="HOGENOM" id="CLU_002678_33_4_1"/>
<dbReference type="InParanoid" id="Q99JB0"/>
<dbReference type="OMA" id="DCFLHAA"/>
<dbReference type="OrthoDB" id="4748970at2759"/>
<dbReference type="PhylomeDB" id="Q99JB0"/>
<dbReference type="TreeFam" id="TF350556"/>
<dbReference type="BioGRID-ORCS" id="93691">
    <property type="hits" value="4 hits in 80 CRISPR screens"/>
</dbReference>
<dbReference type="ChiTaRS" id="Klf7">
    <property type="organism name" value="mouse"/>
</dbReference>
<dbReference type="PRO" id="PR:Q99JB0"/>
<dbReference type="Proteomes" id="UP000000589">
    <property type="component" value="Chromosome 1"/>
</dbReference>
<dbReference type="RNAct" id="Q99JB0">
    <property type="molecule type" value="protein"/>
</dbReference>
<dbReference type="Bgee" id="ENSMUSG00000025959">
    <property type="expression patterns" value="Expressed in rostral migratory stream and 264 other cell types or tissues"/>
</dbReference>
<dbReference type="ExpressionAtlas" id="Q99JB0">
    <property type="expression patterns" value="baseline and differential"/>
</dbReference>
<dbReference type="GO" id="GO:0005829">
    <property type="term" value="C:cytosol"/>
    <property type="evidence" value="ECO:0007669"/>
    <property type="project" value="Ensembl"/>
</dbReference>
<dbReference type="GO" id="GO:0005654">
    <property type="term" value="C:nucleoplasm"/>
    <property type="evidence" value="ECO:0007669"/>
    <property type="project" value="Ensembl"/>
</dbReference>
<dbReference type="GO" id="GO:0005634">
    <property type="term" value="C:nucleus"/>
    <property type="evidence" value="ECO:0000250"/>
    <property type="project" value="UniProtKB"/>
</dbReference>
<dbReference type="GO" id="GO:0003677">
    <property type="term" value="F:DNA binding"/>
    <property type="evidence" value="ECO:0000314"/>
    <property type="project" value="MGI"/>
</dbReference>
<dbReference type="GO" id="GO:0001228">
    <property type="term" value="F:DNA-binding transcription activator activity, RNA polymerase II-specific"/>
    <property type="evidence" value="ECO:0007669"/>
    <property type="project" value="Ensembl"/>
</dbReference>
<dbReference type="GO" id="GO:0003700">
    <property type="term" value="F:DNA-binding transcription factor activity"/>
    <property type="evidence" value="ECO:0000314"/>
    <property type="project" value="MGI"/>
</dbReference>
<dbReference type="GO" id="GO:0000978">
    <property type="term" value="F:RNA polymerase II cis-regulatory region sequence-specific DNA binding"/>
    <property type="evidence" value="ECO:0007669"/>
    <property type="project" value="Ensembl"/>
</dbReference>
<dbReference type="GO" id="GO:0008270">
    <property type="term" value="F:zinc ion binding"/>
    <property type="evidence" value="ECO:0007669"/>
    <property type="project" value="UniProtKB-KW"/>
</dbReference>
<dbReference type="GO" id="GO:0007411">
    <property type="term" value="P:axon guidance"/>
    <property type="evidence" value="ECO:0000315"/>
    <property type="project" value="MGI"/>
</dbReference>
<dbReference type="GO" id="GO:0007409">
    <property type="term" value="P:axonogenesis"/>
    <property type="evidence" value="ECO:0000315"/>
    <property type="project" value="MGI"/>
</dbReference>
<dbReference type="GO" id="GO:0048813">
    <property type="term" value="P:dendrite morphogenesis"/>
    <property type="evidence" value="ECO:0000315"/>
    <property type="project" value="MGI"/>
</dbReference>
<dbReference type="GO" id="GO:0042593">
    <property type="term" value="P:glucose homeostasis"/>
    <property type="evidence" value="ECO:0000250"/>
    <property type="project" value="UniProtKB"/>
</dbReference>
<dbReference type="GO" id="GO:1904178">
    <property type="term" value="P:negative regulation of adipose tissue development"/>
    <property type="evidence" value="ECO:0000250"/>
    <property type="project" value="UniProtKB"/>
</dbReference>
<dbReference type="GO" id="GO:0061179">
    <property type="term" value="P:negative regulation of insulin secretion involved in cellular response to glucose stimulus"/>
    <property type="evidence" value="ECO:0000250"/>
    <property type="project" value="UniProtKB"/>
</dbReference>
<dbReference type="GO" id="GO:0000122">
    <property type="term" value="P:negative regulation of transcription by RNA polymerase II"/>
    <property type="evidence" value="ECO:0000250"/>
    <property type="project" value="UniProtKB"/>
</dbReference>
<dbReference type="GO" id="GO:0045893">
    <property type="term" value="P:positive regulation of DNA-templated transcription"/>
    <property type="evidence" value="ECO:0000314"/>
    <property type="project" value="MGI"/>
</dbReference>
<dbReference type="GO" id="GO:0045604">
    <property type="term" value="P:regulation of epidermal cell differentiation"/>
    <property type="evidence" value="ECO:0007669"/>
    <property type="project" value="Ensembl"/>
</dbReference>
<dbReference type="CDD" id="cd21585">
    <property type="entry name" value="KLF7_N"/>
    <property type="match status" value="1"/>
</dbReference>
<dbReference type="FunFam" id="3.30.160.60:FF:000021">
    <property type="entry name" value="Basic krueppel-like factor 3"/>
    <property type="match status" value="1"/>
</dbReference>
<dbReference type="FunFam" id="3.30.160.60:FF:001395">
    <property type="entry name" value="Krueppel-like factor 7"/>
    <property type="match status" value="1"/>
</dbReference>
<dbReference type="FunFam" id="3.30.160.60:FF:000624">
    <property type="entry name" value="zinc finger protein 697"/>
    <property type="match status" value="1"/>
</dbReference>
<dbReference type="Gene3D" id="3.30.160.60">
    <property type="entry name" value="Classic Zinc Finger"/>
    <property type="match status" value="3"/>
</dbReference>
<dbReference type="InterPro" id="IPR036236">
    <property type="entry name" value="Znf_C2H2_sf"/>
</dbReference>
<dbReference type="InterPro" id="IPR013087">
    <property type="entry name" value="Znf_C2H2_type"/>
</dbReference>
<dbReference type="PANTHER" id="PTHR23235:SF77">
    <property type="entry name" value="KRUEPPEL-LIKE FACTOR 7"/>
    <property type="match status" value="1"/>
</dbReference>
<dbReference type="PANTHER" id="PTHR23235">
    <property type="entry name" value="KRUEPPEL-LIKE TRANSCRIPTION FACTOR"/>
    <property type="match status" value="1"/>
</dbReference>
<dbReference type="Pfam" id="PF00096">
    <property type="entry name" value="zf-C2H2"/>
    <property type="match status" value="3"/>
</dbReference>
<dbReference type="SMART" id="SM00355">
    <property type="entry name" value="ZnF_C2H2"/>
    <property type="match status" value="3"/>
</dbReference>
<dbReference type="SUPFAM" id="SSF57667">
    <property type="entry name" value="beta-beta-alpha zinc fingers"/>
    <property type="match status" value="2"/>
</dbReference>
<dbReference type="PROSITE" id="PS00028">
    <property type="entry name" value="ZINC_FINGER_C2H2_1"/>
    <property type="match status" value="3"/>
</dbReference>
<dbReference type="PROSITE" id="PS50157">
    <property type="entry name" value="ZINC_FINGER_C2H2_2"/>
    <property type="match status" value="3"/>
</dbReference>
<protein>
    <recommendedName>
        <fullName>Krueppel-like factor 7</fullName>
    </recommendedName>
</protein>
<feature type="chain" id="PRO_0000047175" description="Krueppel-like factor 7">
    <location>
        <begin position="1"/>
        <end position="301"/>
    </location>
</feature>
<feature type="zinc finger region" description="C2H2-type 1" evidence="3">
    <location>
        <begin position="218"/>
        <end position="242"/>
    </location>
</feature>
<feature type="zinc finger region" description="C2H2-type 2" evidence="3">
    <location>
        <begin position="248"/>
        <end position="272"/>
    </location>
</feature>
<feature type="zinc finger region" description="C2H2-type 3" evidence="3">
    <location>
        <begin position="278"/>
        <end position="300"/>
    </location>
</feature>
<feature type="short sequence motif" description="9aaTAD; inactive" evidence="1">
    <location>
        <begin position="93"/>
        <end position="101"/>
    </location>
</feature>
<feature type="short sequence motif" description="Nuclear localization signal" evidence="2">
    <location>
        <begin position="214"/>
        <end position="219"/>
    </location>
</feature>
<feature type="sequence conflict" description="In Ref. 2; AAK08964." evidence="9" ref="2">
    <original>S</original>
    <variation>P</variation>
    <location>
        <position position="175"/>
    </location>
</feature>
<reference key="1">
    <citation type="journal article" date="2001" name="Development">
        <title>mKlf7, a potential transcriptional regulator of TrkA nerve growth factor receptor expression in sensory and sympathetic neurons.</title>
        <authorList>
            <person name="Lei L."/>
            <person name="Ma L."/>
            <person name="Nef S."/>
            <person name="Thai T."/>
            <person name="Parada L.F."/>
        </authorList>
    </citation>
    <scope>NUCLEOTIDE SEQUENCE [MRNA]</scope>
    <scope>DEVELOPMENTAL STAGE</scope>
    <source>
        <strain>CD-1</strain>
    </source>
</reference>
<reference key="2">
    <citation type="journal article" date="2001" name="Dev. Biol.">
        <title>Developmental expression of mouse Kruppel-like transcription factor KLF7 suggests a potential role in neurogenesis.</title>
        <authorList>
            <person name="Laub F.B."/>
            <person name="Aldabe R."/>
            <person name="Friedrich V. Jr."/>
            <person name="Ohnishi S."/>
            <person name="Yoshida T."/>
            <person name="Ramirez F."/>
        </authorList>
    </citation>
    <scope>NUCLEOTIDE SEQUENCE [MRNA]</scope>
    <scope>FUNCTION</scope>
    <scope>TISSUE SPECIFICITY</scope>
    <scope>DEVELOPMENTAL STAGE</scope>
    <source>
        <strain>Swiss Webster / NIH</strain>
    </source>
</reference>
<reference key="3">
    <citation type="journal article" date="2004" name="Genome Res.">
        <title>The status, quality, and expansion of the NIH full-length cDNA project: the Mammalian Gene Collection (MGC).</title>
        <authorList>
            <consortium name="The MGC Project Team"/>
        </authorList>
    </citation>
    <scope>NUCLEOTIDE SEQUENCE [LARGE SCALE MRNA]</scope>
    <source>
        <strain>FVB/N</strain>
        <tissue>Mammary gland</tissue>
    </source>
</reference>
<reference key="4">
    <citation type="journal article" date="2004" name="Mol. Cell. Biol.">
        <title>Identification of MoKA, a novel F-box protein that modulates Krueppel-like transcription factor 7 activity.</title>
        <authorList>
            <person name="Smaldone S."/>
            <person name="Laub F."/>
            <person name="Else C."/>
            <person name="Dragomir C."/>
            <person name="Ramirez F."/>
        </authorList>
    </citation>
    <scope>INTERACTION WITH FBXO38</scope>
</reference>
<reference key="5">
    <citation type="journal article" date="2005" name="Mol. Cell. Biol.">
        <title>Transcription factor KLF7 is important for neuronal morphogenesis in selected regions of the nervous system.</title>
        <authorList>
            <person name="Laub F."/>
            <person name="Lei L."/>
            <person name="Sumiyoshi H."/>
            <person name="Kajimura D."/>
            <person name="Dragomir C."/>
            <person name="Smaldone S."/>
            <person name="Puche A.C."/>
            <person name="Petros T.J."/>
            <person name="Mason C."/>
            <person name="Parada L.F."/>
            <person name="Ramirez F."/>
        </authorList>
    </citation>
    <scope>DISRUPTION PHENOTYPE</scope>
    <scope>FUNCTION</scope>
</reference>
<reference key="6">
    <citation type="journal article" date="2017" name="J. Biol. Chem.">
        <title>Characterization of enhancers and the role of the transcription factor KLF7 in regulating corneal epithelial differentiation.</title>
        <authorList>
            <person name="Klein R.H."/>
            <person name="Hu W."/>
            <person name="Kashgari G."/>
            <person name="Lin Z."/>
            <person name="Nguyen T."/>
            <person name="Doan M."/>
            <person name="Andersen B."/>
        </authorList>
    </citation>
    <scope>DEVELOPMENTAL STAGE</scope>
    <scope>TISSUE SPECIFICITY</scope>
</reference>
<proteinExistence type="evidence at protein level"/>
<sequence>MDVLASYSIFQELQLVHDTGYFSALPSLEETWQQTCLELERYLQTEPRRISETFGEDLDCFLHASPPPCIEESFRRLDPLLLPVEATICEKSSAVDILLSRDKLLSETCLSLQPTSSSLDSYTAVNQAQLNAVTSLTPPSSPELSRHLVKTSQTLSAVDGTVTLKLVAKKASLSSVKVGGVAAAAAVTPAGAVKSGQSDSEQGGGGADTCPENKKRVHRCQFNGCRKVYTKSSHLKAHQRTHTGEKPYKCSWEGCEWRFARSDELTRHYRKHTGAKPFKCNHCDRCFSRSDHLALHMKRHI</sequence>
<organism>
    <name type="scientific">Mus musculus</name>
    <name type="common">Mouse</name>
    <dbReference type="NCBI Taxonomy" id="10090"/>
    <lineage>
        <taxon>Eukaryota</taxon>
        <taxon>Metazoa</taxon>
        <taxon>Chordata</taxon>
        <taxon>Craniata</taxon>
        <taxon>Vertebrata</taxon>
        <taxon>Euteleostomi</taxon>
        <taxon>Mammalia</taxon>
        <taxon>Eutheria</taxon>
        <taxon>Euarchontoglires</taxon>
        <taxon>Glires</taxon>
        <taxon>Rodentia</taxon>
        <taxon>Myomorpha</taxon>
        <taxon>Muroidea</taxon>
        <taxon>Muridae</taxon>
        <taxon>Murinae</taxon>
        <taxon>Mus</taxon>
        <taxon>Mus</taxon>
    </lineage>
</organism>
<comment type="function">
    <text evidence="1 4 5 7">Transcriptional factor (PubMed:11245580). Plays a critical role in neuronal morphogenesis (PubMed:11336497, PubMed:15964824). Represses the corneal epithelium differentiation (By similarity). Acts also as a metabolic regulator, by modulating insulin sensitivity in pancreatic beta cells and skeletal muscle cells. Inhibits transcriptional inducers of adipogenesis and has a repressive role in the expression of several adipokines, including leptin (By similarity).</text>
</comment>
<comment type="subunit">
    <text evidence="6">Interacts with FBXO38.</text>
</comment>
<comment type="subcellular location">
    <subcellularLocation>
        <location evidence="1">Nucleus</location>
    </subcellularLocation>
</comment>
<comment type="tissue specificity">
    <text evidence="5 8">Widely expressed (PubMed:11336497). Detected in the cornea epithelium (at protein level) (PubMed:28916725).</text>
</comment>
<comment type="developmental stage">
    <text evidence="4 5 8">Expression starts at 8.5 dpc in the trigeminal ganglion, the VII-VIII neural crest complex, and the subventricular neuroepithelium of both forebrain and hindbrain regions. At 11.5 dpc, expression is detected in the neural crest-derived sensory nervous system and, at 15.5 dpc, in the brain, spinal cord, retinal neuroepithelium and the inferior XI/X complex (PubMed:11245580, PubMed:11336497). In postnatal and adult animals, expression is confined to the cerebellum and dorsal root ganglia (PubMed:11336497). Expressed in the cornea epithelium at both 18.5 dpc and early postnatal (P5) but not at P50, when the corneal epithelium is fully differentiated (PubMed:28916725).</text>
</comment>
<comment type="domain">
    <text evidence="1">The acidic N-terminal part may favor interaction with the basic domain of transcription factors.</text>
</comment>
<comment type="domain">
    <text evidence="1">The 9aaTAD motif is a transactivation domain present in a large number of yeast and animal transcription factors. In KLF7, the motif is inactive.</text>
</comment>
<comment type="disruption phenotype">
    <text evidence="8">Deficient mice die within the first 3 days of life, showing little or no milk in the stomachs, hypopnea, cyanosis, olfactory bulb hypoplasia, axon outgrowth defects in the olfactory and optic nerves, defects of axon growth in the brain and reduced dendritic branching in the hippocampus.</text>
</comment>
<comment type="similarity">
    <text evidence="9">Belongs to the krueppel C2H2-type zinc-finger protein family.</text>
</comment>
<name>KLF7_MOUSE</name>